<feature type="chain" id="PRO_0000101407" description="Uncharacterized protein RP691">
    <location>
        <begin position="1"/>
        <end position="656"/>
    </location>
</feature>
<organism>
    <name type="scientific">Rickettsia prowazekii (strain Madrid E)</name>
    <dbReference type="NCBI Taxonomy" id="272947"/>
    <lineage>
        <taxon>Bacteria</taxon>
        <taxon>Pseudomonadati</taxon>
        <taxon>Pseudomonadota</taxon>
        <taxon>Alphaproteobacteria</taxon>
        <taxon>Rickettsiales</taxon>
        <taxon>Rickettsiaceae</taxon>
        <taxon>Rickettsieae</taxon>
        <taxon>Rickettsia</taxon>
        <taxon>typhus group</taxon>
    </lineage>
</organism>
<proteinExistence type="predicted"/>
<sequence>MSNTLAVISNKLEVMMKYYHDISNLGIRLYKTTKALVSFDLGEVFKIWFCDKNFKDLKKIDQSVIYTQYLETVLSKIAATGKYQDKHISHSQWINCFETINNYDDFLHTKLKKLIGIKNKNIIDSILDDIGDINSLEFNIIFSKVQVFLSDNLDKFENLVQVAKKIDSIVYPLTREYFLYRYLAKSILVAKTLSLHSYSEAEFNIVKKTHLNFTNYLNSLEQSLTKIEKATNKYNEEHKIASWLTAKSDLVSNHSGKIAATYATLVGGVIALRSYVIDEKDPWYELCALPSTILAMLQILASFPGTVLSNRQTKEINNNMFQELKNSDQNAQDIKFLFDCTPSFANDPINTAASCFRYASNLGLQPIDLLNNDIVNRIILYTALRWSAVAGVVEEQSKVTNFMQTKLIKFLHHEIVPALIENKKFTSKEIKPYFYLLYKHSAQDRNTQIKLQTIYHKLTNEDIDLNNIKLDINTYYGWKSVVMCSAMTTLILDYICFYFRNQELAFYEDPMFYASTSVKFMRLASLLVSTYYGNKLIENITGEKLAHDMFFQKFYYNDAARLTVAIVPLIMFESIKDLKLLSLATLIDVLTTAISDLNVGNAISSAGKNIAEKTATTLTWLNKIASGTNDDTNDDIVIDIAHTEELQPLGCVDISD</sequence>
<accession>Q9ZCN2</accession>
<gene>
    <name type="ordered locus">RP691</name>
</gene>
<reference key="1">
    <citation type="journal article" date="1998" name="Nature">
        <title>The genome sequence of Rickettsia prowazekii and the origin of mitochondria.</title>
        <authorList>
            <person name="Andersson S.G.E."/>
            <person name="Zomorodipour A."/>
            <person name="Andersson J.O."/>
            <person name="Sicheritz-Ponten T."/>
            <person name="Alsmark U.C.M."/>
            <person name="Podowski R.M."/>
            <person name="Naeslund A.K."/>
            <person name="Eriksson A.-S."/>
            <person name="Winkler H.H."/>
            <person name="Kurland C.G."/>
        </authorList>
    </citation>
    <scope>NUCLEOTIDE SEQUENCE [LARGE SCALE GENOMIC DNA]</scope>
    <source>
        <strain>Madrid E</strain>
    </source>
</reference>
<keyword id="KW-1185">Reference proteome</keyword>
<protein>
    <recommendedName>
        <fullName>Uncharacterized protein RP691</fullName>
    </recommendedName>
</protein>
<dbReference type="EMBL" id="AJ235272">
    <property type="protein sequence ID" value="CAA15128.1"/>
    <property type="molecule type" value="Genomic_DNA"/>
</dbReference>
<dbReference type="PIR" id="F71675">
    <property type="entry name" value="F71675"/>
</dbReference>
<dbReference type="RefSeq" id="NP_221052.1">
    <property type="nucleotide sequence ID" value="NC_000963.1"/>
</dbReference>
<dbReference type="RefSeq" id="WP_010886349.1">
    <property type="nucleotide sequence ID" value="NC_000963.1"/>
</dbReference>
<dbReference type="STRING" id="272947.gene:17555768"/>
<dbReference type="EnsemblBacteria" id="CAA15128">
    <property type="protein sequence ID" value="CAA15128"/>
    <property type="gene ID" value="CAA15128"/>
</dbReference>
<dbReference type="KEGG" id="rpr:RP691"/>
<dbReference type="PATRIC" id="fig|272947.5.peg.713"/>
<dbReference type="HOGENOM" id="CLU_417887_0_0_5"/>
<dbReference type="OrthoDB" id="7160869at2"/>
<dbReference type="Proteomes" id="UP000002480">
    <property type="component" value="Chromosome"/>
</dbReference>
<name>Y691_RICPR</name>